<name>RS15_THEM4</name>
<organism>
    <name type="scientific">Thermosipho melanesiensis (strain DSM 12029 / CIP 104789 / BI429)</name>
    <dbReference type="NCBI Taxonomy" id="391009"/>
    <lineage>
        <taxon>Bacteria</taxon>
        <taxon>Thermotogati</taxon>
        <taxon>Thermotogota</taxon>
        <taxon>Thermotogae</taxon>
        <taxon>Thermotogales</taxon>
        <taxon>Fervidobacteriaceae</taxon>
        <taxon>Thermosipho</taxon>
    </lineage>
</organism>
<evidence type="ECO:0000255" key="1">
    <source>
        <dbReference type="HAMAP-Rule" id="MF_01343"/>
    </source>
</evidence>
<evidence type="ECO:0000305" key="2"/>
<protein>
    <recommendedName>
        <fullName evidence="1">Small ribosomal subunit protein uS15</fullName>
    </recommendedName>
    <alternativeName>
        <fullName evidence="2">30S ribosomal protein S15</fullName>
    </alternativeName>
</protein>
<keyword id="KW-0687">Ribonucleoprotein</keyword>
<keyword id="KW-0689">Ribosomal protein</keyword>
<keyword id="KW-0694">RNA-binding</keyword>
<keyword id="KW-0699">rRNA-binding</keyword>
<dbReference type="EMBL" id="CP000716">
    <property type="protein sequence ID" value="ABR29940.1"/>
    <property type="molecule type" value="Genomic_DNA"/>
</dbReference>
<dbReference type="RefSeq" id="WP_012056302.1">
    <property type="nucleotide sequence ID" value="NC_009616.1"/>
</dbReference>
<dbReference type="SMR" id="A6LJ39"/>
<dbReference type="STRING" id="391009.Tmel_0061"/>
<dbReference type="KEGG" id="tme:Tmel_0061"/>
<dbReference type="eggNOG" id="COG0184">
    <property type="taxonomic scope" value="Bacteria"/>
</dbReference>
<dbReference type="HOGENOM" id="CLU_148518_0_0_0"/>
<dbReference type="OrthoDB" id="9799262at2"/>
<dbReference type="Proteomes" id="UP000001110">
    <property type="component" value="Chromosome"/>
</dbReference>
<dbReference type="GO" id="GO:0022627">
    <property type="term" value="C:cytosolic small ribosomal subunit"/>
    <property type="evidence" value="ECO:0007669"/>
    <property type="project" value="TreeGrafter"/>
</dbReference>
<dbReference type="GO" id="GO:0019843">
    <property type="term" value="F:rRNA binding"/>
    <property type="evidence" value="ECO:0007669"/>
    <property type="project" value="UniProtKB-UniRule"/>
</dbReference>
<dbReference type="GO" id="GO:0003735">
    <property type="term" value="F:structural constituent of ribosome"/>
    <property type="evidence" value="ECO:0007669"/>
    <property type="project" value="InterPro"/>
</dbReference>
<dbReference type="GO" id="GO:0006412">
    <property type="term" value="P:translation"/>
    <property type="evidence" value="ECO:0007669"/>
    <property type="project" value="UniProtKB-UniRule"/>
</dbReference>
<dbReference type="CDD" id="cd00353">
    <property type="entry name" value="Ribosomal_S15p_S13e"/>
    <property type="match status" value="1"/>
</dbReference>
<dbReference type="FunFam" id="1.10.287.10:FF:000002">
    <property type="entry name" value="30S ribosomal protein S15"/>
    <property type="match status" value="1"/>
</dbReference>
<dbReference type="Gene3D" id="6.10.250.3130">
    <property type="match status" value="1"/>
</dbReference>
<dbReference type="Gene3D" id="1.10.287.10">
    <property type="entry name" value="S15/NS1, RNA-binding"/>
    <property type="match status" value="1"/>
</dbReference>
<dbReference type="HAMAP" id="MF_01343_B">
    <property type="entry name" value="Ribosomal_uS15_B"/>
    <property type="match status" value="1"/>
</dbReference>
<dbReference type="InterPro" id="IPR000589">
    <property type="entry name" value="Ribosomal_uS15"/>
</dbReference>
<dbReference type="InterPro" id="IPR005290">
    <property type="entry name" value="Ribosomal_uS15_bac-type"/>
</dbReference>
<dbReference type="InterPro" id="IPR009068">
    <property type="entry name" value="uS15_NS1_RNA-bd_sf"/>
</dbReference>
<dbReference type="NCBIfam" id="TIGR00952">
    <property type="entry name" value="S15_bact"/>
    <property type="match status" value="1"/>
</dbReference>
<dbReference type="PANTHER" id="PTHR23321">
    <property type="entry name" value="RIBOSOMAL PROTEIN S15, BACTERIAL AND ORGANELLAR"/>
    <property type="match status" value="1"/>
</dbReference>
<dbReference type="PANTHER" id="PTHR23321:SF26">
    <property type="entry name" value="SMALL RIBOSOMAL SUBUNIT PROTEIN US15M"/>
    <property type="match status" value="1"/>
</dbReference>
<dbReference type="Pfam" id="PF00312">
    <property type="entry name" value="Ribosomal_S15"/>
    <property type="match status" value="1"/>
</dbReference>
<dbReference type="SMART" id="SM01387">
    <property type="entry name" value="Ribosomal_S15"/>
    <property type="match status" value="1"/>
</dbReference>
<dbReference type="SUPFAM" id="SSF47060">
    <property type="entry name" value="S15/NS1 RNA-binding domain"/>
    <property type="match status" value="1"/>
</dbReference>
<dbReference type="PROSITE" id="PS00362">
    <property type="entry name" value="RIBOSOMAL_S15"/>
    <property type="match status" value="1"/>
</dbReference>
<reference key="1">
    <citation type="submission" date="2007-05" db="EMBL/GenBank/DDBJ databases">
        <title>Complete sequence of Thermosipho melanesiensis BI429.</title>
        <authorList>
            <consortium name="US DOE Joint Genome Institute"/>
            <person name="Copeland A."/>
            <person name="Lucas S."/>
            <person name="Lapidus A."/>
            <person name="Barry K."/>
            <person name="Glavina del Rio T."/>
            <person name="Dalin E."/>
            <person name="Tice H."/>
            <person name="Pitluck S."/>
            <person name="Chertkov O."/>
            <person name="Brettin T."/>
            <person name="Bruce D."/>
            <person name="Detter J.C."/>
            <person name="Han C."/>
            <person name="Schmutz J."/>
            <person name="Larimer F."/>
            <person name="Land M."/>
            <person name="Hauser L."/>
            <person name="Kyrpides N."/>
            <person name="Mikhailova N."/>
            <person name="Nelson K."/>
            <person name="Gogarten J.P."/>
            <person name="Noll K."/>
            <person name="Richardson P."/>
        </authorList>
    </citation>
    <scope>NUCLEOTIDE SEQUENCE [LARGE SCALE GENOMIC DNA]</scope>
    <source>
        <strain>DSM 12029 / CIP 104789 / BI429</strain>
    </source>
</reference>
<proteinExistence type="inferred from homology"/>
<feature type="chain" id="PRO_0000354219" description="Small ribosomal subunit protein uS15">
    <location>
        <begin position="1"/>
        <end position="84"/>
    </location>
</feature>
<gene>
    <name evidence="1" type="primary">rpsO</name>
    <name type="ordered locus">Tmel_0061</name>
</gene>
<comment type="function">
    <text evidence="1">One of the primary rRNA binding proteins, it binds directly to 16S rRNA where it helps nucleate assembly of the platform of the 30S subunit by binding and bridging several RNA helices of the 16S rRNA.</text>
</comment>
<comment type="function">
    <text evidence="1">Forms an intersubunit bridge (bridge B4) with the 23S rRNA of the 50S subunit in the ribosome.</text>
</comment>
<comment type="subunit">
    <text evidence="1">Part of the 30S ribosomal subunit. Forms a bridge to the 50S subunit in the 70S ribosome, contacting the 23S rRNA.</text>
</comment>
<comment type="similarity">
    <text evidence="1">Belongs to the universal ribosomal protein uS15 family.</text>
</comment>
<accession>A6LJ39</accession>
<sequence>MNKEEIIKEFQIHEGDTGSAEVQVALLTARIKHLTEHLKKHPKDYHSRRGLMKLVGRRRKILKYLRNKNPEAYKEVIQKLGLRK</sequence>